<name>RADB_PYRAB</name>
<reference key="1">
    <citation type="journal article" date="2003" name="Mol. Microbiol.">
        <title>An integrated analysis of the genome of the hyperthermophilic archaeon Pyrococcus abyssi.</title>
        <authorList>
            <person name="Cohen G.N."/>
            <person name="Barbe V."/>
            <person name="Flament D."/>
            <person name="Galperin M."/>
            <person name="Heilig R."/>
            <person name="Lecompte O."/>
            <person name="Poch O."/>
            <person name="Prieur D."/>
            <person name="Querellou J."/>
            <person name="Ripp R."/>
            <person name="Thierry J.-C."/>
            <person name="Van der Oost J."/>
            <person name="Weissenbach J."/>
            <person name="Zivanovic Y."/>
            <person name="Forterre P."/>
        </authorList>
    </citation>
    <scope>NUCLEOTIDE SEQUENCE [LARGE SCALE GENOMIC DNA]</scope>
    <source>
        <strain>GE5 / Orsay</strain>
    </source>
</reference>
<reference key="2">
    <citation type="journal article" date="2012" name="Curr. Microbiol.">
        <title>Re-annotation of two hyperthermophilic archaea Pyrococcus abyssi GE5 and Pyrococcus furiosus DSM 3638.</title>
        <authorList>
            <person name="Gao J."/>
            <person name="Wang J."/>
        </authorList>
    </citation>
    <scope>GENOME REANNOTATION</scope>
    <source>
        <strain>GE5 / Orsay</strain>
    </source>
</reference>
<evidence type="ECO:0000250" key="1"/>
<evidence type="ECO:0000255" key="2"/>
<evidence type="ECO:0000305" key="3"/>
<proteinExistence type="inferred from homology"/>
<feature type="chain" id="PRO_0000150116" description="DNA repair and recombination protein RadB">
    <location>
        <begin position="1"/>
        <end position="229"/>
    </location>
</feature>
<feature type="binding site" evidence="2">
    <location>
        <begin position="28"/>
        <end position="35"/>
    </location>
    <ligand>
        <name>ATP</name>
        <dbReference type="ChEBI" id="CHEBI:30616"/>
    </ligand>
</feature>
<accession>Q9V2F6</accession>
<accession>G8ZFV3</accession>
<dbReference type="EMBL" id="AJ248283">
    <property type="protein sequence ID" value="CAB49042.1"/>
    <property type="status" value="ALT_INIT"/>
    <property type="molecule type" value="Genomic_DNA"/>
</dbReference>
<dbReference type="EMBL" id="HE613800">
    <property type="protein sequence ID" value="CCE69494.1"/>
    <property type="molecule type" value="Genomic_DNA"/>
</dbReference>
<dbReference type="PIR" id="C75199">
    <property type="entry name" value="C75199"/>
</dbReference>
<dbReference type="RefSeq" id="WP_010867242.1">
    <property type="nucleotide sequence ID" value="NC_000868.1"/>
</dbReference>
<dbReference type="SMR" id="Q9V2F6"/>
<dbReference type="STRING" id="272844.PAB2270"/>
<dbReference type="KEGG" id="pab:PAB2270"/>
<dbReference type="PATRIC" id="fig|272844.11.peg.131"/>
<dbReference type="eggNOG" id="arCOG00417">
    <property type="taxonomic scope" value="Archaea"/>
</dbReference>
<dbReference type="HOGENOM" id="CLU_041732_2_0_2"/>
<dbReference type="OrthoDB" id="17644at2157"/>
<dbReference type="Proteomes" id="UP000000810">
    <property type="component" value="Chromosome"/>
</dbReference>
<dbReference type="Proteomes" id="UP000009139">
    <property type="component" value="Chromosome"/>
</dbReference>
<dbReference type="GO" id="GO:0005524">
    <property type="term" value="F:ATP binding"/>
    <property type="evidence" value="ECO:0007669"/>
    <property type="project" value="UniProtKB-UniRule"/>
</dbReference>
<dbReference type="GO" id="GO:0016887">
    <property type="term" value="F:ATP hydrolysis activity"/>
    <property type="evidence" value="ECO:0007669"/>
    <property type="project" value="InterPro"/>
</dbReference>
<dbReference type="GO" id="GO:0140664">
    <property type="term" value="F:ATP-dependent DNA damage sensor activity"/>
    <property type="evidence" value="ECO:0007669"/>
    <property type="project" value="InterPro"/>
</dbReference>
<dbReference type="GO" id="GO:0003684">
    <property type="term" value="F:damaged DNA binding"/>
    <property type="evidence" value="ECO:0007669"/>
    <property type="project" value="UniProtKB-UniRule"/>
</dbReference>
<dbReference type="GO" id="GO:0006310">
    <property type="term" value="P:DNA recombination"/>
    <property type="evidence" value="ECO:0007669"/>
    <property type="project" value="UniProtKB-UniRule"/>
</dbReference>
<dbReference type="GO" id="GO:0006281">
    <property type="term" value="P:DNA repair"/>
    <property type="evidence" value="ECO:0007669"/>
    <property type="project" value="UniProtKB-UniRule"/>
</dbReference>
<dbReference type="Gene3D" id="3.40.50.300">
    <property type="entry name" value="P-loop containing nucleotide triphosphate hydrolases"/>
    <property type="match status" value="1"/>
</dbReference>
<dbReference type="HAMAP" id="MF_00350">
    <property type="entry name" value="RadB"/>
    <property type="match status" value="1"/>
</dbReference>
<dbReference type="InterPro" id="IPR003593">
    <property type="entry name" value="AAA+_ATPase"/>
</dbReference>
<dbReference type="InterPro" id="IPR013632">
    <property type="entry name" value="DNA_recomb/repair_Rad51_C"/>
</dbReference>
<dbReference type="InterPro" id="IPR011939">
    <property type="entry name" value="DNA_repair_and_recomb_RadB"/>
</dbReference>
<dbReference type="InterPro" id="IPR027417">
    <property type="entry name" value="P-loop_NTPase"/>
</dbReference>
<dbReference type="InterPro" id="IPR020588">
    <property type="entry name" value="RecA_ATP-bd"/>
</dbReference>
<dbReference type="NCBIfam" id="TIGR02237">
    <property type="entry name" value="recomb_radB"/>
    <property type="match status" value="1"/>
</dbReference>
<dbReference type="PANTHER" id="PTHR22942:SF47">
    <property type="entry name" value="DNA REPAIR AND RECOMBINATION PROTEIN RADB"/>
    <property type="match status" value="1"/>
</dbReference>
<dbReference type="PANTHER" id="PTHR22942">
    <property type="entry name" value="RECA/RAD51/RADA DNA STRAND-PAIRING FAMILY MEMBER"/>
    <property type="match status" value="1"/>
</dbReference>
<dbReference type="Pfam" id="PF08423">
    <property type="entry name" value="Rad51"/>
    <property type="match status" value="1"/>
</dbReference>
<dbReference type="PIRSF" id="PIRSF003336">
    <property type="entry name" value="RadB"/>
    <property type="match status" value="1"/>
</dbReference>
<dbReference type="PRINTS" id="PR01874">
    <property type="entry name" value="DNAREPAIRADA"/>
</dbReference>
<dbReference type="SMART" id="SM00382">
    <property type="entry name" value="AAA"/>
    <property type="match status" value="1"/>
</dbReference>
<dbReference type="SUPFAM" id="SSF52540">
    <property type="entry name" value="P-loop containing nucleoside triphosphate hydrolases"/>
    <property type="match status" value="1"/>
</dbReference>
<dbReference type="PROSITE" id="PS50162">
    <property type="entry name" value="RECA_2"/>
    <property type="match status" value="1"/>
</dbReference>
<comment type="function">
    <text evidence="1">Involved in DNA repair and in homologous recombination. May regulate the cleavage reactions of the branch-structured DNA. Has a very weak ATPase activity that is not stimulated by DNA. Binds DNA but does not promote DNA strands exchange (By similarity).</text>
</comment>
<comment type="similarity">
    <text evidence="3">Belongs to the eukaryotic RecA-like protein family. RadB subfamily.</text>
</comment>
<comment type="sequence caution" evidence="3">
    <conflict type="erroneous initiation">
        <sequence resource="EMBL-CDS" id="CAB49042"/>
    </conflict>
    <text>Extended N-terminus.</text>
</comment>
<protein>
    <recommendedName>
        <fullName>DNA repair and recombination protein RadB</fullName>
    </recommendedName>
</protein>
<sequence length="229" mass="25694">MTLTTGVKGLDELLGGGVARGVILQVYGPFATGKTTFAMQVGLLNEGKVAYVDTEGGFSPERLKQMAESRGLDPEKALSKFIIFEPMDLNEQRRIISKLKTVVSDKFSLVVVDSLTAHYRAEGSRDHVELAKQLQVLQWLARKKNVAVIVVNQVYYDSNTNTLRPIAEHTLGYRTKDILRFEKFRVGVRLAVLERHRFRPEGGIVYFKITDKGIEDVLKAKPENGEENI</sequence>
<keyword id="KW-0067">ATP-binding</keyword>
<keyword id="KW-0227">DNA damage</keyword>
<keyword id="KW-0233">DNA recombination</keyword>
<keyword id="KW-0238">DNA-binding</keyword>
<keyword id="KW-0547">Nucleotide-binding</keyword>
<gene>
    <name type="primary">radB</name>
    <name type="ordered locus">PYRAB01180</name>
    <name type="ORF">PAB2270</name>
</gene>
<organism>
    <name type="scientific">Pyrococcus abyssi (strain GE5 / Orsay)</name>
    <dbReference type="NCBI Taxonomy" id="272844"/>
    <lineage>
        <taxon>Archaea</taxon>
        <taxon>Methanobacteriati</taxon>
        <taxon>Methanobacteriota</taxon>
        <taxon>Thermococci</taxon>
        <taxon>Thermococcales</taxon>
        <taxon>Thermococcaceae</taxon>
        <taxon>Pyrococcus</taxon>
    </lineage>
</organism>